<organism>
    <name type="scientific">Brucella melitensis biotype 1 (strain ATCC 23456 / CCUG 17765 / NCTC 10094 / 16M)</name>
    <dbReference type="NCBI Taxonomy" id="224914"/>
    <lineage>
        <taxon>Bacteria</taxon>
        <taxon>Pseudomonadati</taxon>
        <taxon>Pseudomonadota</taxon>
        <taxon>Alphaproteobacteria</taxon>
        <taxon>Hyphomicrobiales</taxon>
        <taxon>Brucellaceae</taxon>
        <taxon>Brucella/Ochrobactrum group</taxon>
        <taxon>Brucella</taxon>
    </lineage>
</organism>
<dbReference type="EC" id="5.2.1.8"/>
<dbReference type="EMBL" id="AE008917">
    <property type="protein sequence ID" value="AAL52250.1"/>
    <property type="status" value="ALT_INIT"/>
    <property type="molecule type" value="Genomic_DNA"/>
</dbReference>
<dbReference type="PIR" id="AG3385">
    <property type="entry name" value="AG3385"/>
</dbReference>
<dbReference type="SMR" id="Q8YGT8"/>
<dbReference type="KEGG" id="bme:BMEI1069"/>
<dbReference type="KEGG" id="bmel:DK63_345"/>
<dbReference type="PATRIC" id="fig|224914.52.peg.357"/>
<dbReference type="eggNOG" id="COG0544">
    <property type="taxonomic scope" value="Bacteria"/>
</dbReference>
<dbReference type="PhylomeDB" id="Q8YGT8"/>
<dbReference type="PRO" id="PR:Q8YGT8"/>
<dbReference type="Proteomes" id="UP000000419">
    <property type="component" value="Chromosome I"/>
</dbReference>
<dbReference type="GO" id="GO:0005737">
    <property type="term" value="C:cytoplasm"/>
    <property type="evidence" value="ECO:0007669"/>
    <property type="project" value="UniProtKB-SubCell"/>
</dbReference>
<dbReference type="GO" id="GO:0003755">
    <property type="term" value="F:peptidyl-prolyl cis-trans isomerase activity"/>
    <property type="evidence" value="ECO:0007669"/>
    <property type="project" value="UniProtKB-UniRule"/>
</dbReference>
<dbReference type="GO" id="GO:0044183">
    <property type="term" value="F:protein folding chaperone"/>
    <property type="evidence" value="ECO:0007669"/>
    <property type="project" value="TreeGrafter"/>
</dbReference>
<dbReference type="GO" id="GO:0043022">
    <property type="term" value="F:ribosome binding"/>
    <property type="evidence" value="ECO:0007669"/>
    <property type="project" value="TreeGrafter"/>
</dbReference>
<dbReference type="GO" id="GO:0051083">
    <property type="term" value="P:'de novo' cotranslational protein folding"/>
    <property type="evidence" value="ECO:0007669"/>
    <property type="project" value="TreeGrafter"/>
</dbReference>
<dbReference type="GO" id="GO:0051301">
    <property type="term" value="P:cell division"/>
    <property type="evidence" value="ECO:0007669"/>
    <property type="project" value="UniProtKB-KW"/>
</dbReference>
<dbReference type="GO" id="GO:0061077">
    <property type="term" value="P:chaperone-mediated protein folding"/>
    <property type="evidence" value="ECO:0007669"/>
    <property type="project" value="TreeGrafter"/>
</dbReference>
<dbReference type="GO" id="GO:0015031">
    <property type="term" value="P:protein transport"/>
    <property type="evidence" value="ECO:0007669"/>
    <property type="project" value="UniProtKB-UniRule"/>
</dbReference>
<dbReference type="GO" id="GO:0043335">
    <property type="term" value="P:protein unfolding"/>
    <property type="evidence" value="ECO:0007669"/>
    <property type="project" value="TreeGrafter"/>
</dbReference>
<dbReference type="FunFam" id="3.10.50.40:FF:000001">
    <property type="entry name" value="Trigger factor"/>
    <property type="match status" value="1"/>
</dbReference>
<dbReference type="Gene3D" id="3.10.50.40">
    <property type="match status" value="1"/>
</dbReference>
<dbReference type="Gene3D" id="3.30.70.1050">
    <property type="entry name" value="Trigger factor ribosome-binding domain"/>
    <property type="match status" value="1"/>
</dbReference>
<dbReference type="Gene3D" id="1.10.3120.10">
    <property type="entry name" value="Trigger factor, C-terminal domain"/>
    <property type="match status" value="1"/>
</dbReference>
<dbReference type="HAMAP" id="MF_00303">
    <property type="entry name" value="Trigger_factor_Tig"/>
    <property type="match status" value="1"/>
</dbReference>
<dbReference type="InterPro" id="IPR046357">
    <property type="entry name" value="PPIase_dom_sf"/>
</dbReference>
<dbReference type="InterPro" id="IPR001179">
    <property type="entry name" value="PPIase_FKBP_dom"/>
</dbReference>
<dbReference type="InterPro" id="IPR005215">
    <property type="entry name" value="Trig_fac"/>
</dbReference>
<dbReference type="InterPro" id="IPR008880">
    <property type="entry name" value="Trigger_fac_C"/>
</dbReference>
<dbReference type="InterPro" id="IPR037041">
    <property type="entry name" value="Trigger_fac_C_sf"/>
</dbReference>
<dbReference type="InterPro" id="IPR008881">
    <property type="entry name" value="Trigger_fac_ribosome-bd_bac"/>
</dbReference>
<dbReference type="InterPro" id="IPR036611">
    <property type="entry name" value="Trigger_fac_ribosome-bd_sf"/>
</dbReference>
<dbReference type="InterPro" id="IPR027304">
    <property type="entry name" value="Trigger_fact/SurA_dom_sf"/>
</dbReference>
<dbReference type="NCBIfam" id="TIGR00115">
    <property type="entry name" value="tig"/>
    <property type="match status" value="1"/>
</dbReference>
<dbReference type="PANTHER" id="PTHR30560">
    <property type="entry name" value="TRIGGER FACTOR CHAPERONE AND PEPTIDYL-PROLYL CIS/TRANS ISOMERASE"/>
    <property type="match status" value="1"/>
</dbReference>
<dbReference type="PANTHER" id="PTHR30560:SF3">
    <property type="entry name" value="TRIGGER FACTOR-LIKE PROTEIN TIG, CHLOROPLASTIC"/>
    <property type="match status" value="1"/>
</dbReference>
<dbReference type="Pfam" id="PF00254">
    <property type="entry name" value="FKBP_C"/>
    <property type="match status" value="1"/>
</dbReference>
<dbReference type="Pfam" id="PF05698">
    <property type="entry name" value="Trigger_C"/>
    <property type="match status" value="1"/>
</dbReference>
<dbReference type="Pfam" id="PF05697">
    <property type="entry name" value="Trigger_N"/>
    <property type="match status" value="1"/>
</dbReference>
<dbReference type="PIRSF" id="PIRSF003095">
    <property type="entry name" value="Trigger_factor"/>
    <property type="match status" value="1"/>
</dbReference>
<dbReference type="SUPFAM" id="SSF54534">
    <property type="entry name" value="FKBP-like"/>
    <property type="match status" value="1"/>
</dbReference>
<dbReference type="SUPFAM" id="SSF109998">
    <property type="entry name" value="Triger factor/SurA peptide-binding domain-like"/>
    <property type="match status" value="1"/>
</dbReference>
<dbReference type="SUPFAM" id="SSF102735">
    <property type="entry name" value="Trigger factor ribosome-binding domain"/>
    <property type="match status" value="1"/>
</dbReference>
<dbReference type="PROSITE" id="PS50059">
    <property type="entry name" value="FKBP_PPIASE"/>
    <property type="match status" value="1"/>
</dbReference>
<gene>
    <name type="primary">tig</name>
    <name type="ordered locus">BMEI1069</name>
</gene>
<name>TIG_BRUME</name>
<reference key="1">
    <citation type="journal article" date="2002" name="Proc. Natl. Acad. Sci. U.S.A.">
        <title>The genome sequence of the facultative intracellular pathogen Brucella melitensis.</title>
        <authorList>
            <person name="DelVecchio V.G."/>
            <person name="Kapatral V."/>
            <person name="Redkar R.J."/>
            <person name="Patra G."/>
            <person name="Mujer C."/>
            <person name="Los T."/>
            <person name="Ivanova N."/>
            <person name="Anderson I."/>
            <person name="Bhattacharyya A."/>
            <person name="Lykidis A."/>
            <person name="Reznik G."/>
            <person name="Jablonski L."/>
            <person name="Larsen N."/>
            <person name="D'Souza M."/>
            <person name="Bernal A."/>
            <person name="Mazur M."/>
            <person name="Goltsman E."/>
            <person name="Selkov E."/>
            <person name="Elzer P.H."/>
            <person name="Hagius S."/>
            <person name="O'Callaghan D."/>
            <person name="Letesson J.-J."/>
            <person name="Haselkorn R."/>
            <person name="Kyrpides N.C."/>
            <person name="Overbeek R."/>
        </authorList>
    </citation>
    <scope>NUCLEOTIDE SEQUENCE [LARGE SCALE GENOMIC DNA]</scope>
    <source>
        <strain>ATCC 23456 / CCUG 17765 / NCTC 10094 / 16M</strain>
    </source>
</reference>
<comment type="function">
    <text evidence="1">Involved in protein export. Acts as a chaperone by maintaining the newly synthesized protein in an open conformation. Functions as a peptidyl-prolyl cis-trans isomerase (By similarity).</text>
</comment>
<comment type="catalytic activity">
    <reaction>
        <text>[protein]-peptidylproline (omega=180) = [protein]-peptidylproline (omega=0)</text>
        <dbReference type="Rhea" id="RHEA:16237"/>
        <dbReference type="Rhea" id="RHEA-COMP:10747"/>
        <dbReference type="Rhea" id="RHEA-COMP:10748"/>
        <dbReference type="ChEBI" id="CHEBI:83833"/>
        <dbReference type="ChEBI" id="CHEBI:83834"/>
        <dbReference type="EC" id="5.2.1.8"/>
    </reaction>
</comment>
<comment type="subcellular location">
    <subcellularLocation>
        <location>Cytoplasm</location>
    </subcellularLocation>
    <text evidence="1">About half TF is bound to the ribosome near the polypeptide exit tunnel while the other half is free in the cytoplasm.</text>
</comment>
<comment type="domain">
    <text evidence="1">Consists of 3 domains; the N-terminus binds the ribosome, the middle domain has PPIase activity, while the C-terminus has intrinsic chaperone activity on its own.</text>
</comment>
<comment type="similarity">
    <text evidence="3">Belongs to the FKBP-type PPIase family. Tig subfamily.</text>
</comment>
<comment type="sequence caution" evidence="3">
    <conflict type="erroneous initiation">
        <sequence resource="EMBL-CDS" id="AAL52250"/>
    </conflict>
</comment>
<sequence length="477" mass="53561">MQVTETLNEGLKREIKVVVPAGDLEAKLAERLETARGRARINGFRPGKVPTAHLRKMYGKSFMAEIVNEILNDSSRSILAERNEKSATQPEVIMSEDEKEAEKVLDGKADFVFSLNYEVLPAIEVKDFSKIAVTREVVDISDEEVDEQVKRIASSTRTFETKKGKAENEDRVTIDYLGKLDGEPFEGGADNDAQLVLGSGQFIPGFEEQLIGLKAGDEKVITVTFPAEYGAAHLAGKEATFDIKVKEVAKPNELVLDDETAKKLGIESLERLRQVVREQIESQYGQITRQKVKRQILDALDGDYQFETPQKLVDAEFNNIWQQINFDLQQAGRTFEDEETTEEAAREEYRKLAERRVRLGLVLSEIGEKAGVEVTEEELQRAVYDQVRRYPGQEKEIYDFLRRTPDAVANLRAPIFEEKVVDHLLANINVTDKKVSKEELTAEDEDAASEAKPAKKAAAKKKAAPKKKAEEGKSEEA</sequence>
<feature type="chain" id="PRO_0000179324" description="Trigger factor">
    <location>
        <begin position="1"/>
        <end position="477"/>
    </location>
</feature>
<feature type="domain" description="PPIase FKBP-type">
    <location>
        <begin position="169"/>
        <end position="254"/>
    </location>
</feature>
<feature type="region of interest" description="Disordered" evidence="2">
    <location>
        <begin position="435"/>
        <end position="477"/>
    </location>
</feature>
<feature type="compositionally biased region" description="Basic residues" evidence="2">
    <location>
        <begin position="454"/>
        <end position="466"/>
    </location>
</feature>
<feature type="compositionally biased region" description="Basic and acidic residues" evidence="2">
    <location>
        <begin position="467"/>
        <end position="477"/>
    </location>
</feature>
<protein>
    <recommendedName>
        <fullName>Trigger factor</fullName>
        <shortName>TF</shortName>
        <ecNumber>5.2.1.8</ecNumber>
    </recommendedName>
    <alternativeName>
        <fullName>PPIase</fullName>
    </alternativeName>
</protein>
<keyword id="KW-0131">Cell cycle</keyword>
<keyword id="KW-0132">Cell division</keyword>
<keyword id="KW-0143">Chaperone</keyword>
<keyword id="KW-0963">Cytoplasm</keyword>
<keyword id="KW-0413">Isomerase</keyword>
<keyword id="KW-0697">Rotamase</keyword>
<proteinExistence type="inferred from homology"/>
<evidence type="ECO:0000250" key="1"/>
<evidence type="ECO:0000256" key="2">
    <source>
        <dbReference type="SAM" id="MobiDB-lite"/>
    </source>
</evidence>
<evidence type="ECO:0000305" key="3"/>
<accession>Q8YGT8</accession>